<gene>
    <name evidence="1" type="primary">ade2</name>
    <name type="synonym">adeC2</name>
    <name type="ordered locus">LCA_1670</name>
</gene>
<sequence length="580" mass="61849">MDKSTLKQLIDQAAGRKPADTIIKNAKIVDVYNARIIEGTLAIADSRFLGIDAAYTADNVINAHGQYVVPGLIDPHIHIESANVSPAVFGSLVTPHGTTTILADPHEIVNVAGMRGLEYMVASAKNTALDIKYTMPSCVPAANPTLETSGAVITADEIKQSYDQGLTYGLAEFMNYPGVVNADDGVLDELLVSLNARKMIDGHSPALHGQGLNAYAAAGVHNDHECTQVDEMLDRISRGMYVYLRYGTVSKNMPTLLKGVTPQNARFCCLCGDDLQSVTLRETGHLDESIRVAIQNGIDPLTAIQMATINTAQCTGLSDRGGIAPGLKADFLLVDDLEHFNVNQTFIDGQKIAANGAYLLPTDDSVAGFDDLLETVHLDNFSADQLKLNLTSDKAHVIGLQSISRTQNLVLPVAHDAEGDFHYKPSEDIVKVAVVERHHLTGNVGVGLLSGFGLQNGAIATSIGHDSHNLVVVGTNDADMVVAIDALKACQGGGVAVQNGQVIATLPFVIGGLMSTEPIDSLIAHQKAFNTICHEQLNVTAQFDPIMKLGAMPLDVIPNLRITDKGLVDVTKFEIIDINA</sequence>
<protein>
    <recommendedName>
        <fullName evidence="1">Adenine deaminase 2</fullName>
        <shortName evidence="1">Adenase 2</shortName>
        <shortName evidence="1">Adenine aminase 2</shortName>
        <ecNumber evidence="1">3.5.4.2</ecNumber>
    </recommendedName>
</protein>
<name>ADEC2_LATSS</name>
<keyword id="KW-0378">Hydrolase</keyword>
<keyword id="KW-0464">Manganese</keyword>
<keyword id="KW-1185">Reference proteome</keyword>
<feature type="chain" id="PRO_0000292385" description="Adenine deaminase 2">
    <location>
        <begin position="1"/>
        <end position="580"/>
    </location>
</feature>
<proteinExistence type="inferred from homology"/>
<dbReference type="EC" id="3.5.4.2" evidence="1"/>
<dbReference type="EMBL" id="CR936503">
    <property type="protein sequence ID" value="CAI55977.1"/>
    <property type="molecule type" value="Genomic_DNA"/>
</dbReference>
<dbReference type="RefSeq" id="WP_011375362.1">
    <property type="nucleotide sequence ID" value="NC_007576.1"/>
</dbReference>
<dbReference type="SMR" id="Q38V07"/>
<dbReference type="STRING" id="314315.LCA_1670"/>
<dbReference type="KEGG" id="lsa:LCA_1670"/>
<dbReference type="eggNOG" id="COG1001">
    <property type="taxonomic scope" value="Bacteria"/>
</dbReference>
<dbReference type="HOGENOM" id="CLU_027935_0_0_9"/>
<dbReference type="OrthoDB" id="9775607at2"/>
<dbReference type="Proteomes" id="UP000002707">
    <property type="component" value="Chromosome"/>
</dbReference>
<dbReference type="GO" id="GO:0000034">
    <property type="term" value="F:adenine deaminase activity"/>
    <property type="evidence" value="ECO:0007669"/>
    <property type="project" value="UniProtKB-UniRule"/>
</dbReference>
<dbReference type="GO" id="GO:0006146">
    <property type="term" value="P:adenine catabolic process"/>
    <property type="evidence" value="ECO:0007669"/>
    <property type="project" value="InterPro"/>
</dbReference>
<dbReference type="CDD" id="cd01295">
    <property type="entry name" value="AdeC"/>
    <property type="match status" value="1"/>
</dbReference>
<dbReference type="Gene3D" id="3.20.20.140">
    <property type="entry name" value="Metal-dependent hydrolases"/>
    <property type="match status" value="1"/>
</dbReference>
<dbReference type="Gene3D" id="2.30.40.10">
    <property type="entry name" value="Urease, subunit C, domain 1"/>
    <property type="match status" value="1"/>
</dbReference>
<dbReference type="HAMAP" id="MF_01518">
    <property type="entry name" value="Adenine_deamin"/>
    <property type="match status" value="1"/>
</dbReference>
<dbReference type="InterPro" id="IPR006679">
    <property type="entry name" value="Adenine_deam"/>
</dbReference>
<dbReference type="InterPro" id="IPR026912">
    <property type="entry name" value="Adenine_deam_C"/>
</dbReference>
<dbReference type="InterPro" id="IPR006680">
    <property type="entry name" value="Amidohydro-rel"/>
</dbReference>
<dbReference type="InterPro" id="IPR011059">
    <property type="entry name" value="Metal-dep_hydrolase_composite"/>
</dbReference>
<dbReference type="InterPro" id="IPR032466">
    <property type="entry name" value="Metal_Hydrolase"/>
</dbReference>
<dbReference type="NCBIfam" id="TIGR01178">
    <property type="entry name" value="ade"/>
    <property type="match status" value="1"/>
</dbReference>
<dbReference type="PANTHER" id="PTHR11113:SF2">
    <property type="entry name" value="ADENINE DEAMINASE"/>
    <property type="match status" value="1"/>
</dbReference>
<dbReference type="PANTHER" id="PTHR11113">
    <property type="entry name" value="N-ACETYLGLUCOSAMINE-6-PHOSPHATE DEACETYLASE"/>
    <property type="match status" value="1"/>
</dbReference>
<dbReference type="Pfam" id="PF13382">
    <property type="entry name" value="Adenine_deam_C"/>
    <property type="match status" value="1"/>
</dbReference>
<dbReference type="Pfam" id="PF01979">
    <property type="entry name" value="Amidohydro_1"/>
    <property type="match status" value="1"/>
</dbReference>
<dbReference type="SUPFAM" id="SSF51338">
    <property type="entry name" value="Composite domain of metallo-dependent hydrolases"/>
    <property type="match status" value="1"/>
</dbReference>
<dbReference type="SUPFAM" id="SSF51556">
    <property type="entry name" value="Metallo-dependent hydrolases"/>
    <property type="match status" value="1"/>
</dbReference>
<evidence type="ECO:0000255" key="1">
    <source>
        <dbReference type="HAMAP-Rule" id="MF_01518"/>
    </source>
</evidence>
<accession>Q38V07</accession>
<comment type="catalytic activity">
    <reaction evidence="1">
        <text>adenine + H2O + H(+) = hypoxanthine + NH4(+)</text>
        <dbReference type="Rhea" id="RHEA:23688"/>
        <dbReference type="ChEBI" id="CHEBI:15377"/>
        <dbReference type="ChEBI" id="CHEBI:15378"/>
        <dbReference type="ChEBI" id="CHEBI:16708"/>
        <dbReference type="ChEBI" id="CHEBI:17368"/>
        <dbReference type="ChEBI" id="CHEBI:28938"/>
        <dbReference type="EC" id="3.5.4.2"/>
    </reaction>
</comment>
<comment type="cofactor">
    <cofactor evidence="1">
        <name>Mn(2+)</name>
        <dbReference type="ChEBI" id="CHEBI:29035"/>
    </cofactor>
</comment>
<comment type="similarity">
    <text evidence="1">Belongs to the metallo-dependent hydrolases superfamily. Adenine deaminase family.</text>
</comment>
<organism>
    <name type="scientific">Latilactobacillus sakei subsp. sakei (strain 23K)</name>
    <name type="common">Lactobacillus sakei subsp. sakei</name>
    <dbReference type="NCBI Taxonomy" id="314315"/>
    <lineage>
        <taxon>Bacteria</taxon>
        <taxon>Bacillati</taxon>
        <taxon>Bacillota</taxon>
        <taxon>Bacilli</taxon>
        <taxon>Lactobacillales</taxon>
        <taxon>Lactobacillaceae</taxon>
        <taxon>Latilactobacillus</taxon>
    </lineage>
</organism>
<reference key="1">
    <citation type="journal article" date="2005" name="Nat. Biotechnol.">
        <title>The complete genome sequence of the meat-borne lactic acid bacterium Lactobacillus sakei 23K.</title>
        <authorList>
            <person name="Chaillou S."/>
            <person name="Champomier-Verges M.-C."/>
            <person name="Cornet M."/>
            <person name="Crutz-Le Coq A.-M."/>
            <person name="Dudez A.-M."/>
            <person name="Martin V."/>
            <person name="Beaufils S."/>
            <person name="Darbon-Rongere E."/>
            <person name="Bossy R."/>
            <person name="Loux V."/>
            <person name="Zagorec M."/>
        </authorList>
    </citation>
    <scope>NUCLEOTIDE SEQUENCE [LARGE SCALE GENOMIC DNA]</scope>
    <source>
        <strain>23K</strain>
    </source>
</reference>